<name>LSM12_BOVIN</name>
<dbReference type="EMBL" id="BC120190">
    <property type="protein sequence ID" value="AAI20191.1"/>
    <property type="status" value="ALT_SEQ"/>
    <property type="molecule type" value="mRNA"/>
</dbReference>
<dbReference type="RefSeq" id="NP_001069566.2">
    <property type="nucleotide sequence ID" value="NM_001076098.2"/>
</dbReference>
<dbReference type="FunCoup" id="Q0VCF9">
    <property type="interactions" value="3490"/>
</dbReference>
<dbReference type="STRING" id="9913.ENSBTAP00000021620"/>
<dbReference type="PaxDb" id="9913-ENSBTAP00000021620"/>
<dbReference type="Ensembl" id="ENSBTAT00000021620.5">
    <property type="protein sequence ID" value="ENSBTAP00000021620.4"/>
    <property type="gene ID" value="ENSBTAG00000016252.5"/>
</dbReference>
<dbReference type="GeneID" id="538005"/>
<dbReference type="KEGG" id="bta:538005"/>
<dbReference type="CTD" id="124801"/>
<dbReference type="VEuPathDB" id="HostDB:ENSBTAG00000016252"/>
<dbReference type="VGNC" id="VGNC:31052">
    <property type="gene designation" value="LSM12"/>
</dbReference>
<dbReference type="eggNOG" id="KOG4401">
    <property type="taxonomic scope" value="Eukaryota"/>
</dbReference>
<dbReference type="GeneTree" id="ENSGT00390000006956"/>
<dbReference type="HOGENOM" id="CLU_073383_3_0_1"/>
<dbReference type="InParanoid" id="Q0VCF9"/>
<dbReference type="OMA" id="FEGELYC"/>
<dbReference type="OrthoDB" id="1057137at2759"/>
<dbReference type="TreeFam" id="TF324296"/>
<dbReference type="Proteomes" id="UP000009136">
    <property type="component" value="Chromosome 19"/>
</dbReference>
<dbReference type="Bgee" id="ENSBTAG00000016252">
    <property type="expression patterns" value="Expressed in milk and 105 other cell types or tissues"/>
</dbReference>
<dbReference type="GO" id="GO:0005737">
    <property type="term" value="C:cytoplasm"/>
    <property type="evidence" value="ECO:0000250"/>
    <property type="project" value="UniProtKB"/>
</dbReference>
<dbReference type="GO" id="GO:0003723">
    <property type="term" value="F:RNA binding"/>
    <property type="evidence" value="ECO:0007669"/>
    <property type="project" value="InterPro"/>
</dbReference>
<dbReference type="CDD" id="cd01735">
    <property type="entry name" value="LSm12_N"/>
    <property type="match status" value="1"/>
</dbReference>
<dbReference type="InterPro" id="IPR047574">
    <property type="entry name" value="AD"/>
</dbReference>
<dbReference type="InterPro" id="IPR039683">
    <property type="entry name" value="Lsm12-like"/>
</dbReference>
<dbReference type="InterPro" id="IPR019181">
    <property type="entry name" value="LSM12_ABD"/>
</dbReference>
<dbReference type="InterPro" id="IPR048478">
    <property type="entry name" value="LSM12_LSM"/>
</dbReference>
<dbReference type="InterPro" id="IPR047575">
    <property type="entry name" value="Sm"/>
</dbReference>
<dbReference type="PANTHER" id="PTHR13542">
    <property type="entry name" value="LSM12 HOMOLOG"/>
    <property type="match status" value="1"/>
</dbReference>
<dbReference type="Pfam" id="PF09793">
    <property type="entry name" value="AD"/>
    <property type="match status" value="1"/>
</dbReference>
<dbReference type="Pfam" id="PF21166">
    <property type="entry name" value="LSM12_LSM"/>
    <property type="match status" value="1"/>
</dbReference>
<dbReference type="SMART" id="SM00995">
    <property type="entry name" value="AD"/>
    <property type="match status" value="1"/>
</dbReference>
<dbReference type="PROSITE" id="PS52001">
    <property type="entry name" value="AD"/>
    <property type="match status" value="1"/>
</dbReference>
<dbReference type="PROSITE" id="PS52002">
    <property type="entry name" value="SM"/>
    <property type="match status" value="1"/>
</dbReference>
<keyword id="KW-0007">Acetylation</keyword>
<keyword id="KW-0963">Cytoplasm</keyword>
<keyword id="KW-0597">Phosphoprotein</keyword>
<keyword id="KW-1185">Reference proteome</keyword>
<comment type="function">
    <text evidence="1">Nicotinic acid adenine dinucleotide phosphate (NAADP) binding protein. Confers NAADP sensitivity to the two pore channel complex (TPCs) by acting as TPC accessory protein necessary for NAADP-evoked Ca(2+) release.</text>
</comment>
<comment type="subunit">
    <text evidence="1">Found in a complex with LSM12, TPCN1 and TPCN2. Interacts with TPCN2.</text>
</comment>
<comment type="subcellular location">
    <subcellularLocation>
        <location evidence="1">Cytoplasm</location>
    </subcellularLocation>
    <text evidence="1">Colocalizes with TPCN2.</text>
</comment>
<comment type="similarity">
    <text evidence="4">Belongs to the LSM12 family.</text>
</comment>
<comment type="sequence caution" evidence="4">
    <conflict type="erroneous termination">
        <sequence resource="EMBL-CDS" id="AAI20191"/>
    </conflict>
    <text>Truncated C-terminus.</text>
</comment>
<organism>
    <name type="scientific">Bos taurus</name>
    <name type="common">Bovine</name>
    <dbReference type="NCBI Taxonomy" id="9913"/>
    <lineage>
        <taxon>Eukaryota</taxon>
        <taxon>Metazoa</taxon>
        <taxon>Chordata</taxon>
        <taxon>Craniata</taxon>
        <taxon>Vertebrata</taxon>
        <taxon>Euteleostomi</taxon>
        <taxon>Mammalia</taxon>
        <taxon>Eutheria</taxon>
        <taxon>Laurasiatheria</taxon>
        <taxon>Artiodactyla</taxon>
        <taxon>Ruminantia</taxon>
        <taxon>Pecora</taxon>
        <taxon>Bovidae</taxon>
        <taxon>Bovinae</taxon>
        <taxon>Bos</taxon>
    </lineage>
</organism>
<protein>
    <recommendedName>
        <fullName>Protein LSM12</fullName>
    </recommendedName>
</protein>
<reference key="1">
    <citation type="submission" date="2006-08" db="EMBL/GenBank/DDBJ databases">
        <authorList>
            <consortium name="NIH - Mammalian Gene Collection (MGC) project"/>
        </authorList>
    </citation>
    <scope>NUCLEOTIDE SEQUENCE [LARGE SCALE MRNA]</scope>
    <source>
        <strain>Hereford</strain>
        <tissue>Fetal lung</tissue>
    </source>
</reference>
<feature type="initiator methionine" description="Removed" evidence="1">
    <location>
        <position position="1"/>
    </location>
</feature>
<feature type="chain" id="PRO_0000305125" description="Protein LSM12">
    <location>
        <begin position="2"/>
        <end position="195"/>
    </location>
</feature>
<feature type="domain" description="Sm" evidence="3">
    <location>
        <begin position="2"/>
        <end position="72"/>
    </location>
</feature>
<feature type="domain" description="AD" evidence="2">
    <location>
        <begin position="80"/>
        <end position="174"/>
    </location>
</feature>
<feature type="region of interest" description="Required for NAADP and TPCN2 binding" evidence="1">
    <location>
        <begin position="4"/>
        <end position="67"/>
    </location>
</feature>
<feature type="modified residue" description="N-acetylalanine" evidence="1">
    <location>
        <position position="2"/>
    </location>
</feature>
<feature type="modified residue" description="Phosphothreonine" evidence="1">
    <location>
        <position position="75"/>
    </location>
</feature>
<proteinExistence type="evidence at transcript level"/>
<sequence>MAAPPGEYFSVGSQVSCRTCQEQRLQGEVVAFDYQSKMLALKCPSSSGKPNHADILLINLQYVSEVEIINDRTETPPPLASLNVSKLASKARTEKEEKLSQAYAISAGVSLEGQQLFQTIHKTIKDCKWQEKNIVVMEEVVITPPYQVENCKGKEGSALSHVRKIVEKHFRDVESQKILQRSQAQQPQKEAALSS</sequence>
<evidence type="ECO:0000250" key="1">
    <source>
        <dbReference type="UniProtKB" id="Q3MHD2"/>
    </source>
</evidence>
<evidence type="ECO:0000255" key="2">
    <source>
        <dbReference type="PROSITE-ProRule" id="PRU01345"/>
    </source>
</evidence>
<evidence type="ECO:0000255" key="3">
    <source>
        <dbReference type="PROSITE-ProRule" id="PRU01346"/>
    </source>
</evidence>
<evidence type="ECO:0000305" key="4"/>
<gene>
    <name type="primary">LSM12</name>
</gene>
<accession>Q0VCF9</accession>